<organism>
    <name type="scientific">Bacillus anthracis</name>
    <dbReference type="NCBI Taxonomy" id="1392"/>
    <lineage>
        <taxon>Bacteria</taxon>
        <taxon>Bacillati</taxon>
        <taxon>Bacillota</taxon>
        <taxon>Bacilli</taxon>
        <taxon>Bacillales</taxon>
        <taxon>Bacillaceae</taxon>
        <taxon>Bacillus</taxon>
        <taxon>Bacillus cereus group</taxon>
    </lineage>
</organism>
<keyword id="KW-0227">DNA damage</keyword>
<keyword id="KW-0233">DNA recombination</keyword>
<keyword id="KW-0234">DNA repair</keyword>
<keyword id="KW-1185">Reference proteome</keyword>
<evidence type="ECO:0000255" key="1">
    <source>
        <dbReference type="HAMAP-Rule" id="MF_00201"/>
    </source>
</evidence>
<name>RECO_BACAN</name>
<dbReference type="EMBL" id="AE016879">
    <property type="protein sequence ID" value="AAP28231.1"/>
    <property type="molecule type" value="Genomic_DNA"/>
</dbReference>
<dbReference type="EMBL" id="AE017334">
    <property type="protein sequence ID" value="AAT33643.2"/>
    <property type="molecule type" value="Genomic_DNA"/>
</dbReference>
<dbReference type="EMBL" id="AE017225">
    <property type="protein sequence ID" value="AAT56497.1"/>
    <property type="molecule type" value="Genomic_DNA"/>
</dbReference>
<dbReference type="RefSeq" id="NP_846745.1">
    <property type="nucleotide sequence ID" value="NC_003997.3"/>
</dbReference>
<dbReference type="RefSeq" id="WP_000487010.1">
    <property type="nucleotide sequence ID" value="NZ_WXXJ01000027.1"/>
</dbReference>
<dbReference type="RefSeq" id="YP_030446.1">
    <property type="nucleotide sequence ID" value="NC_005945.1"/>
</dbReference>
<dbReference type="SMR" id="Q81LT9"/>
<dbReference type="STRING" id="261594.GBAA_4522"/>
<dbReference type="DNASU" id="1088247"/>
<dbReference type="GeneID" id="93006802"/>
<dbReference type="KEGG" id="ban:BA_4522"/>
<dbReference type="KEGG" id="bar:GBAA_4522"/>
<dbReference type="KEGG" id="bat:BAS4198"/>
<dbReference type="PATRIC" id="fig|198094.11.peg.4490"/>
<dbReference type="eggNOG" id="COG1381">
    <property type="taxonomic scope" value="Bacteria"/>
</dbReference>
<dbReference type="HOGENOM" id="CLU_066632_4_0_9"/>
<dbReference type="OMA" id="LCTQSET"/>
<dbReference type="OrthoDB" id="9797083at2"/>
<dbReference type="Proteomes" id="UP000000427">
    <property type="component" value="Chromosome"/>
</dbReference>
<dbReference type="Proteomes" id="UP000000594">
    <property type="component" value="Chromosome"/>
</dbReference>
<dbReference type="GO" id="GO:0043590">
    <property type="term" value="C:bacterial nucleoid"/>
    <property type="evidence" value="ECO:0007669"/>
    <property type="project" value="TreeGrafter"/>
</dbReference>
<dbReference type="GO" id="GO:0006310">
    <property type="term" value="P:DNA recombination"/>
    <property type="evidence" value="ECO:0007669"/>
    <property type="project" value="UniProtKB-UniRule"/>
</dbReference>
<dbReference type="GO" id="GO:0006302">
    <property type="term" value="P:double-strand break repair"/>
    <property type="evidence" value="ECO:0007669"/>
    <property type="project" value="TreeGrafter"/>
</dbReference>
<dbReference type="Gene3D" id="2.40.50.140">
    <property type="entry name" value="Nucleic acid-binding proteins"/>
    <property type="match status" value="1"/>
</dbReference>
<dbReference type="Gene3D" id="1.20.1440.120">
    <property type="entry name" value="Recombination protein O, C-terminal domain"/>
    <property type="match status" value="1"/>
</dbReference>
<dbReference type="HAMAP" id="MF_00201">
    <property type="entry name" value="RecO"/>
    <property type="match status" value="1"/>
</dbReference>
<dbReference type="InterPro" id="IPR037278">
    <property type="entry name" value="ARFGAP/RecO"/>
</dbReference>
<dbReference type="InterPro" id="IPR022572">
    <property type="entry name" value="DNA_rep/recomb_RecO_N"/>
</dbReference>
<dbReference type="InterPro" id="IPR012340">
    <property type="entry name" value="NA-bd_OB-fold"/>
</dbReference>
<dbReference type="InterPro" id="IPR003717">
    <property type="entry name" value="RecO"/>
</dbReference>
<dbReference type="InterPro" id="IPR042242">
    <property type="entry name" value="RecO_C"/>
</dbReference>
<dbReference type="NCBIfam" id="TIGR00613">
    <property type="entry name" value="reco"/>
    <property type="match status" value="1"/>
</dbReference>
<dbReference type="PANTHER" id="PTHR33991">
    <property type="entry name" value="DNA REPAIR PROTEIN RECO"/>
    <property type="match status" value="1"/>
</dbReference>
<dbReference type="PANTHER" id="PTHR33991:SF1">
    <property type="entry name" value="DNA REPAIR PROTEIN RECO"/>
    <property type="match status" value="1"/>
</dbReference>
<dbReference type="Pfam" id="PF02565">
    <property type="entry name" value="RecO_C"/>
    <property type="match status" value="1"/>
</dbReference>
<dbReference type="Pfam" id="PF11967">
    <property type="entry name" value="RecO_N"/>
    <property type="match status" value="1"/>
</dbReference>
<dbReference type="SUPFAM" id="SSF57863">
    <property type="entry name" value="ArfGap/RecO-like zinc finger"/>
    <property type="match status" value="1"/>
</dbReference>
<dbReference type="SUPFAM" id="SSF50249">
    <property type="entry name" value="Nucleic acid-binding proteins"/>
    <property type="match status" value="1"/>
</dbReference>
<reference key="1">
    <citation type="journal article" date="2003" name="Nature">
        <title>The genome sequence of Bacillus anthracis Ames and comparison to closely related bacteria.</title>
        <authorList>
            <person name="Read T.D."/>
            <person name="Peterson S.N."/>
            <person name="Tourasse N.J."/>
            <person name="Baillie L.W."/>
            <person name="Paulsen I.T."/>
            <person name="Nelson K.E."/>
            <person name="Tettelin H."/>
            <person name="Fouts D.E."/>
            <person name="Eisen J.A."/>
            <person name="Gill S.R."/>
            <person name="Holtzapple E.K."/>
            <person name="Okstad O.A."/>
            <person name="Helgason E."/>
            <person name="Rilstone J."/>
            <person name="Wu M."/>
            <person name="Kolonay J.F."/>
            <person name="Beanan M.J."/>
            <person name="Dodson R.J."/>
            <person name="Brinkac L.M."/>
            <person name="Gwinn M.L."/>
            <person name="DeBoy R.T."/>
            <person name="Madpu R."/>
            <person name="Daugherty S.C."/>
            <person name="Durkin A.S."/>
            <person name="Haft D.H."/>
            <person name="Nelson W.C."/>
            <person name="Peterson J.D."/>
            <person name="Pop M."/>
            <person name="Khouri H.M."/>
            <person name="Radune D."/>
            <person name="Benton J.L."/>
            <person name="Mahamoud Y."/>
            <person name="Jiang L."/>
            <person name="Hance I.R."/>
            <person name="Weidman J.F."/>
            <person name="Berry K.J."/>
            <person name="Plaut R.D."/>
            <person name="Wolf A.M."/>
            <person name="Watkins K.L."/>
            <person name="Nierman W.C."/>
            <person name="Hazen A."/>
            <person name="Cline R.T."/>
            <person name="Redmond C."/>
            <person name="Thwaite J.E."/>
            <person name="White O."/>
            <person name="Salzberg S.L."/>
            <person name="Thomason B."/>
            <person name="Friedlander A.M."/>
            <person name="Koehler T.M."/>
            <person name="Hanna P.C."/>
            <person name="Kolstoe A.-B."/>
            <person name="Fraser C.M."/>
        </authorList>
    </citation>
    <scope>NUCLEOTIDE SEQUENCE [LARGE SCALE GENOMIC DNA]</scope>
    <source>
        <strain>Ames / isolate Porton</strain>
    </source>
</reference>
<reference key="2">
    <citation type="journal article" date="2009" name="J. Bacteriol.">
        <title>The complete genome sequence of Bacillus anthracis Ames 'Ancestor'.</title>
        <authorList>
            <person name="Ravel J."/>
            <person name="Jiang L."/>
            <person name="Stanley S.T."/>
            <person name="Wilson M.R."/>
            <person name="Decker R.S."/>
            <person name="Read T.D."/>
            <person name="Worsham P."/>
            <person name="Keim P.S."/>
            <person name="Salzberg S.L."/>
            <person name="Fraser-Liggett C.M."/>
            <person name="Rasko D.A."/>
        </authorList>
    </citation>
    <scope>NUCLEOTIDE SEQUENCE [LARGE SCALE GENOMIC DNA]</scope>
    <source>
        <strain>Ames ancestor</strain>
    </source>
</reference>
<reference key="3">
    <citation type="submission" date="2004-01" db="EMBL/GenBank/DDBJ databases">
        <title>Complete genome sequence of Bacillus anthracis Sterne.</title>
        <authorList>
            <person name="Brettin T.S."/>
            <person name="Bruce D."/>
            <person name="Challacombe J.F."/>
            <person name="Gilna P."/>
            <person name="Han C."/>
            <person name="Hill K."/>
            <person name="Hitchcock P."/>
            <person name="Jackson P."/>
            <person name="Keim P."/>
            <person name="Longmire J."/>
            <person name="Lucas S."/>
            <person name="Okinaka R."/>
            <person name="Richardson P."/>
            <person name="Rubin E."/>
            <person name="Tice H."/>
        </authorList>
    </citation>
    <scope>NUCLEOTIDE SEQUENCE [LARGE SCALE GENOMIC DNA]</scope>
    <source>
        <strain>Sterne</strain>
    </source>
</reference>
<accession>Q81LT9</accession>
<accession>Q6HT92</accession>
<accession>Q6KMI4</accession>
<comment type="function">
    <text evidence="1">Involved in DNA repair and RecF pathway recombination.</text>
</comment>
<comment type="similarity">
    <text evidence="1">Belongs to the RecO family.</text>
</comment>
<sequence length="248" mass="28665">MFQKVEGIVIRTTDYGETNKIVTIFSRELGKVSAMARGAKKPKSRLASVSQLMTHGHFLIQMGSGLGTLQQGEIISTMKEIREDIFLTAYASFIVELTDKATEDKKHNPYLFEMLYQTLHYMCEGVDPEVLSLIYQTKMLPVLGMRPYFDTCAICHQETDFVAFSVREGGFLCSRHAEQDQYRIPVGEAVHKLLRLFYHFDLHRLGNVSVKDSTKKQMRLVLNTYYDEYCGIYLKSRRFLEQLDKFQI</sequence>
<gene>
    <name evidence="1" type="primary">recO</name>
    <name type="ordered locus">BA_4522</name>
    <name type="ordered locus">GBAA_4522</name>
    <name type="ordered locus">BAS4198</name>
</gene>
<feature type="chain" id="PRO_0000204925" description="DNA repair protein RecO">
    <location>
        <begin position="1"/>
        <end position="248"/>
    </location>
</feature>
<proteinExistence type="inferred from homology"/>
<protein>
    <recommendedName>
        <fullName evidence="1">DNA repair protein RecO</fullName>
    </recommendedName>
    <alternativeName>
        <fullName evidence="1">Recombination protein O</fullName>
    </alternativeName>
</protein>